<evidence type="ECO:0000250" key="1"/>
<evidence type="ECO:0000250" key="2">
    <source>
        <dbReference type="UniProtKB" id="P0DMV9"/>
    </source>
</evidence>
<evidence type="ECO:0000250" key="3">
    <source>
        <dbReference type="UniProtKB" id="P11142"/>
    </source>
</evidence>
<evidence type="ECO:0000256" key="4">
    <source>
        <dbReference type="SAM" id="MobiDB-lite"/>
    </source>
</evidence>
<evidence type="ECO:0000269" key="5">
    <source>
    </source>
</evidence>
<evidence type="ECO:0000269" key="6">
    <source>
    </source>
</evidence>
<evidence type="ECO:0000269" key="7">
    <source>
    </source>
</evidence>
<evidence type="ECO:0000305" key="8"/>
<reference key="1">
    <citation type="journal article" date="1990" name="Gene">
        <title>Characterization and sequence of a mouse hsp70 gene and its expression in mouse cell lines.</title>
        <authorList>
            <person name="Hunt C."/>
            <person name="Calderwood S."/>
        </authorList>
    </citation>
    <scope>NUCLEOTIDE SEQUENCE [GENOMIC DNA]</scope>
    <source>
        <strain>A/J</strain>
    </source>
</reference>
<reference key="2">
    <citation type="journal article" date="2003" name="Genome Res.">
        <title>Analysis of the gene-dense major histocompatibility complex class III region and its comparison to mouse.</title>
        <authorList>
            <person name="Xie T."/>
            <person name="Rowen L."/>
            <person name="Aguado B."/>
            <person name="Ahearn M.E."/>
            <person name="Madan A."/>
            <person name="Qin S."/>
            <person name="Campbell R.D."/>
            <person name="Hood L."/>
        </authorList>
    </citation>
    <scope>NUCLEOTIDE SEQUENCE [LARGE SCALE GENOMIC DNA]</scope>
    <source>
        <strain>129</strain>
    </source>
</reference>
<reference key="3">
    <citation type="journal article" date="2007" name="J. Biol. Chem.">
        <title>CatSperbeta, a novel transmembrane protein in the CatSper channel complex.</title>
        <authorList>
            <person name="Liu J."/>
            <person name="Xia J."/>
            <person name="Cho K.-H."/>
            <person name="Clapham D.E."/>
            <person name="Ren D."/>
        </authorList>
    </citation>
    <scope>IDENTIFICATION IN A COMPLEX WITH CATSPER1 AND CATSPERB</scope>
</reference>
<reference key="4">
    <citation type="journal article" date="2009" name="Biol. Reprod.">
        <title>A novel, single, transmembrane protein CATSPERG is associated with CATSPER1 channel protein.</title>
        <authorList>
            <person name="Wang H."/>
            <person name="Liu J."/>
            <person name="Cho K.-H."/>
            <person name="Ren D."/>
        </authorList>
    </citation>
    <scope>IDENTIFICATION IN A COMPLEX WITH CATSPER1; CATSPERB AND CATSPERG2</scope>
</reference>
<reference key="5">
    <citation type="journal article" date="2010" name="Cell">
        <title>A tissue-specific atlas of mouse protein phosphorylation and expression.</title>
        <authorList>
            <person name="Huttlin E.L."/>
            <person name="Jedrychowski M.P."/>
            <person name="Elias J.E."/>
            <person name="Goswami T."/>
            <person name="Rad R."/>
            <person name="Beausoleil S.A."/>
            <person name="Villen J."/>
            <person name="Haas W."/>
            <person name="Sowa M.E."/>
            <person name="Gygi S.P."/>
        </authorList>
    </citation>
    <scope>IDENTIFICATION BY MASS SPECTROMETRY [LARGE SCALE ANALYSIS]</scope>
    <source>
        <tissue>Kidney</tissue>
    </source>
</reference>
<reference key="6">
    <citation type="journal article" date="2013" name="Immunity">
        <title>The ubiquitin ligase Stub1 negatively modulates regulatory T cell suppressive activity by promoting degradation of the transcription factor Foxp3.</title>
        <authorList>
            <person name="Chen Z."/>
            <person name="Barbi J."/>
            <person name="Bu S."/>
            <person name="Yang H.Y."/>
            <person name="Li Z."/>
            <person name="Gao Y."/>
            <person name="Jinasena D."/>
            <person name="Fu J."/>
            <person name="Lin F."/>
            <person name="Chen C."/>
            <person name="Zhang J."/>
            <person name="Yu N."/>
            <person name="Li X."/>
            <person name="Shan Z."/>
            <person name="Nie J."/>
            <person name="Gao Z."/>
            <person name="Tian H."/>
            <person name="Li Y."/>
            <person name="Yao Z."/>
            <person name="Zheng Y."/>
            <person name="Park B.V."/>
            <person name="Pan Z."/>
            <person name="Zhang J."/>
            <person name="Dang E."/>
            <person name="Li Z."/>
            <person name="Wang H."/>
            <person name="Luo W."/>
            <person name="Li L."/>
            <person name="Semenza G.L."/>
            <person name="Zheng S.G."/>
            <person name="Loser K."/>
            <person name="Tsun A."/>
            <person name="Greene M.I."/>
            <person name="Pardoll D.M."/>
            <person name="Pan F."/>
            <person name="Li B."/>
        </authorList>
    </citation>
    <scope>INTERACTION WITH FOXP3</scope>
</reference>
<sequence>MAKNTAIGIDLGTTYSCVGVFQHGKVEIIANDQGNRTTPSYVAFTDTERLIGDAAKNQVALNPQNTVFDAKRLIGRKFGDAVVQSDMKHWPFQVVNDGDKPKVQVNYKGESRSFFPEEISSMVLTKMKEIAEAYLGHPVTNAVITVPAYFNDSQRQATKDAGVIAGLNVLRIINEPTAAAIAYGLDRTGKGERNVLIFDLGGGTFDVSILTIDDGIFEVKATAGDTHLGGEDFDNRLVSHFVEEFKRKHKKDISQNKRAVRRLRTACERAKRTLSSSTQASLEIDSLFEGIDFYTSITRARFEELCSDLFRGTLEPVEKALRDAKMDKAQIHDLVLVGGSTRIPKVQKLLQDFFNGRDLNKSINPDEAVAYGAAVQAAILMGDKSENVQDLLLLDVAPLSLGLETAGGVMTALIKRNSTIPTKQTQTFTTYSDNQPGVLIQVYEGERAMTRDNNLLGRFELSGIPPAPRGVPQIEVTFDIDANGILNVTATDKSTGKANKITITNDKGRLSKEEIERMVQEAERYKAEDEVQRDRVAAKNALESYAFNMKSAVEDEGLKGKLSEADKKKVLDKCQEVISWLDSNTLADKEEFVHKREELERVCSPIISGLYQGAGAPGAGGFGAQAPPKGASGSGPTIEEVD</sequence>
<organism>
    <name type="scientific">Mus musculus</name>
    <name type="common">Mouse</name>
    <dbReference type="NCBI Taxonomy" id="10090"/>
    <lineage>
        <taxon>Eukaryota</taxon>
        <taxon>Metazoa</taxon>
        <taxon>Chordata</taxon>
        <taxon>Craniata</taxon>
        <taxon>Vertebrata</taxon>
        <taxon>Euteleostomi</taxon>
        <taxon>Mammalia</taxon>
        <taxon>Eutheria</taxon>
        <taxon>Euarchontoglires</taxon>
        <taxon>Glires</taxon>
        <taxon>Rodentia</taxon>
        <taxon>Myomorpha</taxon>
        <taxon>Muroidea</taxon>
        <taxon>Muridae</taxon>
        <taxon>Murinae</taxon>
        <taxon>Mus</taxon>
        <taxon>Mus</taxon>
    </lineage>
</organism>
<proteinExistence type="evidence at protein level"/>
<dbReference type="EMBL" id="M35021">
    <property type="protein sequence ID" value="AAA37864.1"/>
    <property type="molecule type" value="Genomic_DNA"/>
</dbReference>
<dbReference type="EMBL" id="AF109906">
    <property type="protein sequence ID" value="AAC84168.1"/>
    <property type="molecule type" value="Genomic_DNA"/>
</dbReference>
<dbReference type="CCDS" id="CCDS37592.1"/>
<dbReference type="PIR" id="JH0095">
    <property type="entry name" value="JH0095"/>
</dbReference>
<dbReference type="RefSeq" id="NP_034608.2">
    <property type="nucleotide sequence ID" value="NM_010478.3"/>
</dbReference>
<dbReference type="SMR" id="P17879"/>
<dbReference type="BioGRID" id="200452">
    <property type="interactions" value="47"/>
</dbReference>
<dbReference type="CORUM" id="P17879"/>
<dbReference type="DIP" id="DIP-31549N"/>
<dbReference type="FunCoup" id="P17879">
    <property type="interactions" value="1926"/>
</dbReference>
<dbReference type="IntAct" id="P17879">
    <property type="interactions" value="11"/>
</dbReference>
<dbReference type="MINT" id="P17879"/>
<dbReference type="STRING" id="10090.ENSMUSP00000133815"/>
<dbReference type="GlyGen" id="P17879">
    <property type="glycosylation" value="3 sites, 2 N-linked glycans (2 sites)"/>
</dbReference>
<dbReference type="SwissPalm" id="P17879"/>
<dbReference type="jPOST" id="P17879"/>
<dbReference type="PaxDb" id="10090-ENSMUSP00000133815"/>
<dbReference type="PeptideAtlas" id="P17879"/>
<dbReference type="ProteomicsDB" id="267065"/>
<dbReference type="Pumba" id="P17879"/>
<dbReference type="DNASU" id="15511"/>
<dbReference type="Ensembl" id="ENSMUST00000172753.2">
    <property type="protein sequence ID" value="ENSMUSP00000133815.2"/>
    <property type="gene ID" value="ENSMUSG00000090877.4"/>
</dbReference>
<dbReference type="GeneID" id="15511"/>
<dbReference type="KEGG" id="mmu:15511"/>
<dbReference type="UCSC" id="uc008ceo.1">
    <property type="organism name" value="mouse"/>
</dbReference>
<dbReference type="AGR" id="MGI:99517"/>
<dbReference type="CTD" id="3304"/>
<dbReference type="MGI" id="MGI:99517">
    <property type="gene designation" value="Hspa1b"/>
</dbReference>
<dbReference type="VEuPathDB" id="HostDB:ENSMUSG00000090877"/>
<dbReference type="eggNOG" id="KOG0101">
    <property type="taxonomic scope" value="Eukaryota"/>
</dbReference>
<dbReference type="GeneTree" id="ENSGT00940000161215"/>
<dbReference type="HOGENOM" id="CLU_005965_3_0_1"/>
<dbReference type="InParanoid" id="P17879"/>
<dbReference type="OMA" id="CWTSARR"/>
<dbReference type="OrthoDB" id="2401965at2759"/>
<dbReference type="PhylomeDB" id="P17879"/>
<dbReference type="TreeFam" id="TF105042"/>
<dbReference type="Reactome" id="R-MMU-3371453">
    <property type="pathway name" value="Regulation of HSF1-mediated heat shock response"/>
</dbReference>
<dbReference type="Reactome" id="R-MMU-3371497">
    <property type="pathway name" value="HSP90 chaperone cycle for steroid hormone receptors (SHR) in the presence of ligand"/>
</dbReference>
<dbReference type="Reactome" id="R-MMU-3371568">
    <property type="pathway name" value="Attenuation phase"/>
</dbReference>
<dbReference type="Reactome" id="R-MMU-3371571">
    <property type="pathway name" value="HSF1-dependent transactivation"/>
</dbReference>
<dbReference type="Reactome" id="R-MMU-450408">
    <property type="pathway name" value="AUF1 (hnRNP D0) binds and destabilizes mRNA"/>
</dbReference>
<dbReference type="Reactome" id="R-MMU-6798695">
    <property type="pathway name" value="Neutrophil degranulation"/>
</dbReference>
<dbReference type="Reactome" id="R-MMU-9833482">
    <property type="pathway name" value="PKR-mediated signaling"/>
</dbReference>
<dbReference type="Reactome" id="R-MMU-9841251">
    <property type="pathway name" value="Mitochondrial unfolded protein response (UPRmt)"/>
</dbReference>
<dbReference type="BioGRID-ORCS" id="15511">
    <property type="hits" value="5 hits in 75 CRISPR screens"/>
</dbReference>
<dbReference type="CD-CODE" id="764D0258">
    <property type="entry name" value="Neuronal RNP granule"/>
</dbReference>
<dbReference type="ChiTaRS" id="Hspa1a">
    <property type="organism name" value="mouse"/>
</dbReference>
<dbReference type="PRO" id="PR:P17879"/>
<dbReference type="Proteomes" id="UP000000589">
    <property type="component" value="Chromosome 17"/>
</dbReference>
<dbReference type="RNAct" id="P17879">
    <property type="molecule type" value="protein"/>
</dbReference>
<dbReference type="Bgee" id="ENSMUSG00000090877">
    <property type="expression patterns" value="Expressed in tail skin and 238 other cell types or tissues"/>
</dbReference>
<dbReference type="GO" id="GO:0044297">
    <property type="term" value="C:cell body"/>
    <property type="evidence" value="ECO:0000314"/>
    <property type="project" value="MGI"/>
</dbReference>
<dbReference type="GO" id="GO:0005813">
    <property type="term" value="C:centrosome"/>
    <property type="evidence" value="ECO:0000250"/>
    <property type="project" value="UniProtKB"/>
</dbReference>
<dbReference type="GO" id="GO:0005759">
    <property type="term" value="C:mitochondrial matrix"/>
    <property type="evidence" value="ECO:0000266"/>
    <property type="project" value="MGI"/>
</dbReference>
<dbReference type="GO" id="GO:0005739">
    <property type="term" value="C:mitochondrion"/>
    <property type="evidence" value="ECO:0000314"/>
    <property type="project" value="MGI"/>
</dbReference>
<dbReference type="GO" id="GO:0002199">
    <property type="term" value="C:zona pellucida receptor complex"/>
    <property type="evidence" value="ECO:0000314"/>
    <property type="project" value="MGI"/>
</dbReference>
<dbReference type="GO" id="GO:0005524">
    <property type="term" value="F:ATP binding"/>
    <property type="evidence" value="ECO:0007669"/>
    <property type="project" value="UniProtKB-KW"/>
</dbReference>
<dbReference type="GO" id="GO:0140662">
    <property type="term" value="F:ATP-dependent protein folding chaperone"/>
    <property type="evidence" value="ECO:0007669"/>
    <property type="project" value="InterPro"/>
</dbReference>
<dbReference type="GO" id="GO:0044183">
    <property type="term" value="F:protein folding chaperone"/>
    <property type="evidence" value="ECO:0000314"/>
    <property type="project" value="UniProtKB"/>
</dbReference>
<dbReference type="GO" id="GO:0007339">
    <property type="term" value="P:binding of sperm to zona pellucida"/>
    <property type="evidence" value="ECO:0000314"/>
    <property type="project" value="MGI"/>
</dbReference>
<dbReference type="GO" id="GO:0043066">
    <property type="term" value="P:negative regulation of apoptotic process"/>
    <property type="evidence" value="ECO:0000314"/>
    <property type="project" value="MGI"/>
</dbReference>
<dbReference type="GO" id="GO:0090063">
    <property type="term" value="P:positive regulation of microtubule nucleation"/>
    <property type="evidence" value="ECO:0000250"/>
    <property type="project" value="UniProtKB"/>
</dbReference>
<dbReference type="GO" id="GO:0006457">
    <property type="term" value="P:protein folding"/>
    <property type="evidence" value="ECO:0000314"/>
    <property type="project" value="UniProtKB"/>
</dbReference>
<dbReference type="GO" id="GO:0042026">
    <property type="term" value="P:protein refolding"/>
    <property type="evidence" value="ECO:0000250"/>
    <property type="project" value="UniProtKB"/>
</dbReference>
<dbReference type="GO" id="GO:1901673">
    <property type="term" value="P:regulation of mitotic spindle assembly"/>
    <property type="evidence" value="ECO:0000250"/>
    <property type="project" value="UniProtKB"/>
</dbReference>
<dbReference type="GO" id="GO:0009408">
    <property type="term" value="P:response to heat"/>
    <property type="evidence" value="ECO:0000314"/>
    <property type="project" value="MGI"/>
</dbReference>
<dbReference type="CDD" id="cd10233">
    <property type="entry name" value="ASKHA_NBD_HSP70_HSPA1"/>
    <property type="match status" value="1"/>
</dbReference>
<dbReference type="FunFam" id="2.60.34.10:FF:000002">
    <property type="entry name" value="Heat shock 70 kDa"/>
    <property type="match status" value="1"/>
</dbReference>
<dbReference type="FunFam" id="3.30.420.40:FF:000172">
    <property type="entry name" value="Heat shock 70 kDa protein"/>
    <property type="match status" value="1"/>
</dbReference>
<dbReference type="FunFam" id="3.30.30.30:FF:000001">
    <property type="entry name" value="heat shock 70 kDa protein-like"/>
    <property type="match status" value="1"/>
</dbReference>
<dbReference type="FunFam" id="3.30.420.40:FF:000028">
    <property type="entry name" value="heat shock 70 kDa protein-like"/>
    <property type="match status" value="1"/>
</dbReference>
<dbReference type="FunFam" id="3.30.420.40:FF:000135">
    <property type="entry name" value="Heat shock cognate 71 kDa protein"/>
    <property type="match status" value="1"/>
</dbReference>
<dbReference type="FunFam" id="3.90.640.10:FF:000134">
    <property type="entry name" value="Heat shock cognate 71 kDa protein"/>
    <property type="match status" value="1"/>
</dbReference>
<dbReference type="FunFam" id="1.20.1270.10:FF:000003">
    <property type="entry name" value="heat shock cognate 71 kDa protein-like"/>
    <property type="match status" value="1"/>
</dbReference>
<dbReference type="FunFam" id="3.30.420.40:FF:000026">
    <property type="entry name" value="Heat shock protein 70"/>
    <property type="match status" value="1"/>
</dbReference>
<dbReference type="Gene3D" id="1.20.1270.10">
    <property type="match status" value="1"/>
</dbReference>
<dbReference type="Gene3D" id="3.30.30.30">
    <property type="match status" value="1"/>
</dbReference>
<dbReference type="Gene3D" id="3.30.420.40">
    <property type="match status" value="2"/>
</dbReference>
<dbReference type="Gene3D" id="3.90.640.10">
    <property type="entry name" value="Actin, Chain A, domain 4"/>
    <property type="match status" value="1"/>
</dbReference>
<dbReference type="Gene3D" id="2.60.34.10">
    <property type="entry name" value="Substrate Binding Domain Of DNAk, Chain A, domain 1"/>
    <property type="match status" value="1"/>
</dbReference>
<dbReference type="InterPro" id="IPR043129">
    <property type="entry name" value="ATPase_NBD"/>
</dbReference>
<dbReference type="InterPro" id="IPR018181">
    <property type="entry name" value="Heat_shock_70_CS"/>
</dbReference>
<dbReference type="InterPro" id="IPR029048">
    <property type="entry name" value="HSP70_C_sf"/>
</dbReference>
<dbReference type="InterPro" id="IPR029047">
    <property type="entry name" value="HSP70_peptide-bd_sf"/>
</dbReference>
<dbReference type="InterPro" id="IPR013126">
    <property type="entry name" value="Hsp_70_fam"/>
</dbReference>
<dbReference type="NCBIfam" id="NF001413">
    <property type="entry name" value="PRK00290.1"/>
    <property type="match status" value="1"/>
</dbReference>
<dbReference type="PANTHER" id="PTHR19375">
    <property type="entry name" value="HEAT SHOCK PROTEIN 70KDA"/>
    <property type="match status" value="1"/>
</dbReference>
<dbReference type="Pfam" id="PF00012">
    <property type="entry name" value="HSP70"/>
    <property type="match status" value="1"/>
</dbReference>
<dbReference type="PRINTS" id="PR00301">
    <property type="entry name" value="HEATSHOCK70"/>
</dbReference>
<dbReference type="SUPFAM" id="SSF53067">
    <property type="entry name" value="Actin-like ATPase domain"/>
    <property type="match status" value="2"/>
</dbReference>
<dbReference type="SUPFAM" id="SSF100934">
    <property type="entry name" value="Heat shock protein 70kD (HSP70), C-terminal subdomain"/>
    <property type="match status" value="1"/>
</dbReference>
<dbReference type="SUPFAM" id="SSF100920">
    <property type="entry name" value="Heat shock protein 70kD (HSP70), peptide-binding domain"/>
    <property type="match status" value="1"/>
</dbReference>
<dbReference type="PROSITE" id="PS00297">
    <property type="entry name" value="HSP70_1"/>
    <property type="match status" value="1"/>
</dbReference>
<dbReference type="PROSITE" id="PS00329">
    <property type="entry name" value="HSP70_2"/>
    <property type="match status" value="1"/>
</dbReference>
<dbReference type="PROSITE" id="PS01036">
    <property type="entry name" value="HSP70_3"/>
    <property type="match status" value="1"/>
</dbReference>
<feature type="initiator methionine" description="Removed" evidence="2">
    <location>
        <position position="1"/>
    </location>
</feature>
<feature type="chain" id="PRO_0000078251" description="Heat shock 70 kDa protein 1B">
    <location>
        <begin position="2"/>
        <end position="642"/>
    </location>
</feature>
<feature type="region of interest" description="Nucleotide-binding domain (NBD)" evidence="3">
    <location>
        <begin position="2"/>
        <end position="386"/>
    </location>
</feature>
<feature type="region of interest" description="Substrate-binding domain (SBD)" evidence="3">
    <location>
        <begin position="394"/>
        <end position="509"/>
    </location>
</feature>
<feature type="region of interest" description="Disordered" evidence="4">
    <location>
        <begin position="617"/>
        <end position="642"/>
    </location>
</feature>
<feature type="binding site" evidence="1">
    <location>
        <begin position="12"/>
        <end position="15"/>
    </location>
    <ligand>
        <name>ATP</name>
        <dbReference type="ChEBI" id="CHEBI:30616"/>
    </ligand>
</feature>
<feature type="binding site" evidence="1">
    <location>
        <position position="71"/>
    </location>
    <ligand>
        <name>ATP</name>
        <dbReference type="ChEBI" id="CHEBI:30616"/>
    </ligand>
</feature>
<feature type="binding site" evidence="1">
    <location>
        <begin position="202"/>
        <end position="204"/>
    </location>
    <ligand>
        <name>ATP</name>
        <dbReference type="ChEBI" id="CHEBI:30616"/>
    </ligand>
</feature>
<feature type="binding site" evidence="1">
    <location>
        <begin position="268"/>
        <end position="275"/>
    </location>
    <ligand>
        <name>ATP</name>
        <dbReference type="ChEBI" id="CHEBI:30616"/>
    </ligand>
</feature>
<feature type="binding site" evidence="1">
    <location>
        <begin position="339"/>
        <end position="342"/>
    </location>
    <ligand>
        <name>ATP</name>
        <dbReference type="ChEBI" id="CHEBI:30616"/>
    </ligand>
</feature>
<feature type="modified residue" description="N-acetylalanine" evidence="2">
    <location>
        <position position="2"/>
    </location>
</feature>
<feature type="modified residue" description="N6-acetyllysine" evidence="2">
    <location>
        <position position="77"/>
    </location>
</feature>
<feature type="modified residue" description="N6-acetyllysine" evidence="2">
    <location>
        <position position="108"/>
    </location>
</feature>
<feature type="modified residue" description="N6-acetyllysine" evidence="2">
    <location>
        <position position="246"/>
    </location>
</feature>
<feature type="modified residue" description="N6-acetyllysine" evidence="2">
    <location>
        <position position="348"/>
    </location>
</feature>
<feature type="modified residue" description="Omega-N-methylarginine" evidence="2">
    <location>
        <position position="469"/>
    </location>
</feature>
<feature type="modified residue" description="N6,N6,N6-trimethyllysine; by METTL21A; alternate" evidence="2">
    <location>
        <position position="561"/>
    </location>
</feature>
<feature type="modified residue" description="N6,N6-dimethyllysine; alternate" evidence="2">
    <location>
        <position position="561"/>
    </location>
</feature>
<feature type="modified residue" description="Phosphoserine" evidence="2">
    <location>
        <position position="632"/>
    </location>
</feature>
<feature type="modified residue" description="Phosphoserine" evidence="2">
    <location>
        <position position="634"/>
    </location>
</feature>
<feature type="modified residue" description="Phosphothreonine" evidence="2">
    <location>
        <position position="637"/>
    </location>
</feature>
<accession>P17879</accession>
<accession>Q61689</accession>
<accession>Q925V6</accession>
<name>HS71B_MOUSE</name>
<keyword id="KW-0007">Acetylation</keyword>
<keyword id="KW-0067">ATP-binding</keyword>
<keyword id="KW-0143">Chaperone</keyword>
<keyword id="KW-0963">Cytoplasm</keyword>
<keyword id="KW-0206">Cytoskeleton</keyword>
<keyword id="KW-0488">Methylation</keyword>
<keyword id="KW-0547">Nucleotide-binding</keyword>
<keyword id="KW-0597">Phosphoprotein</keyword>
<keyword id="KW-1185">Reference proteome</keyword>
<keyword id="KW-0346">Stress response</keyword>
<protein>
    <recommendedName>
        <fullName>Heat shock 70 kDa protein 1B</fullName>
    </recommendedName>
    <alternativeName>
        <fullName>Heat shock 70 kDa protein 1</fullName>
        <shortName>HSP70.1</shortName>
    </alternativeName>
</protein>
<comment type="function">
    <text evidence="2">Molecular chaperone implicated in a wide variety of cellular processes, including protection of the proteome from stress, folding and transport of newly synthesized polypeptides, activation of proteolysis of misfolded proteins and the formation and dissociation of protein complexes. Plays a pivotal role in the protein quality control system, ensuring the correct folding of proteins, the re-folding of misfolded proteins and controlling the targeting of proteins for subsequent degradation. This is achieved through cycles of ATP binding, ATP hydrolysis and ADP release, mediated by co-chaperones. The co-chaperones have been shown to not only regulate different steps of the ATPase cycle, but they also have an individual specificity such that one co-chaperone may promote folding of a substrate while another may promote degradation. The affinity for polypeptides is regulated by its nucleotide bound state. In the ATP-bound form, it has a low affinity for substrate proteins. However, upon hydrolysis of the ATP to ADP, it undergoes a conformational change that increases its affinity for substrate proteins. It goes through repeated cycles of ATP hydrolysis and nucleotide exchange, which permits cycles of substrate binding and release. The co-chaperones are of three types: J-domain co-chaperones such as HSP40s (stimulate ATPase hydrolysis by HSP70), the nucleotide exchange factors (NEF) such as BAG1/2/3 (facilitate conversion of HSP70 from the ADP-bound to the ATP-bound state thereby promoting substrate release), and the TPR domain chaperones such as HOPX and STUB1. Maintains protein homeostasis during cellular stress through two opposing mechanisms: protein refolding and degradation. Its acetylation/deacetylation state determines whether it functions in protein refolding or protein degradation by controlling the competitive binding of co-chaperones HOPX and STUB1. During the early stress response, the acetylated form binds to HOPX which assists in chaperone-mediated protein refolding, thereafter, it is deacetylated and binds to ubiquitin ligase STUB1 that promotes ubiquitin-mediated protein degradation. Regulates centrosome integrity during mitosis, and is required for the maintenance of a functional mitotic centrosome that supports the assembly of a bipolar mitotic spindle. Enhances STUB1-mediated SMAD3 ubiquitination and degradation and facilitates STUB1-mediated inhibition of TGF-beta signaling. Essential for STUB1-mediated ubiquitination and degradation of FOXP3 in regulatory T-cells (Treg) during inflammation.</text>
</comment>
<comment type="subunit">
    <text evidence="2 5 6 7">May be an auxiliary component of the CatSper complex (PubMed:17478420, PubMed:19516020). Identified in a IGF2BP1-dependent mRNP granule complex containing untranslated mRNAs (By similarity). Interacts with CHCHD3, DNAJC7, IRAK1BP1, PPP5C and TSC2 (By similarity). Interacts with TERT; the interaction occurs in the absence of the RNA component, TERC, and dissociates once the TERT complex has formed (By similarity). Interacts with TRIM5 (via B30.2/SPRY domain) (By similarity). Interacts with METTL21A (By similarity). Interacts with PRKN (By similarity). Interacts with FOXP3 (PubMed:23973223). Interacts with NOD2; the interaction enhances NOD2 stability (By similarity). Interacts with DNAJC9 (via J domain) (By similarity). Interacts with ATF5; the interaction protects ATF5 from degradation via proteasome-dependent and caspase-dependent processes. Interacts with NAA10, HSP40, HSP90 and HDAC4. The acetylated form and the non-acetylated form interact with HOPX and STUB1 respectively. Interacts with NEDD1 and SMAD3. Interacts (via NBD) with BAG1, BAG2, BAG3 and HSPH1/HSP105. Interacts with DNAJC8 (By similarity).</text>
</comment>
<comment type="interaction">
    <interactant intactId="EBI-397360">
        <id>P17879</id>
    </interactant>
    <interactant intactId="EBI-642911">
        <id>P28301</id>
        <label>Lox</label>
    </interactant>
    <organismsDiffer>false</organismsDiffer>
    <experiments>2</experiments>
</comment>
<comment type="interaction">
    <interactant intactId="EBI-397360">
        <id>P17879</id>
    </interactant>
    <interactant intactId="EBI-448028">
        <id>P70196</id>
        <label>Traf6</label>
    </interactant>
    <organismsDiffer>false</organismsDiffer>
    <experiments>3</experiments>
</comment>
<comment type="subcellular location">
    <subcellularLocation>
        <location evidence="2">Cytoplasm</location>
    </subcellularLocation>
    <subcellularLocation>
        <location evidence="2">Cytoplasm</location>
        <location evidence="2">Cytoskeleton</location>
        <location evidence="2">Microtubule organizing center</location>
        <location evidence="2">Centrosome</location>
    </subcellularLocation>
    <text evidence="2">Localized in cytoplasmic mRNP granules containing untranslated mRNAs.</text>
</comment>
<comment type="tissue specificity">
    <text>Testis-specific.</text>
</comment>
<comment type="domain">
    <text evidence="2">The N-terminal nucleotide binding domain (NBD) (also known as the ATPase domain) is responsible for binding and hydrolyzing ATP. The C-terminal substrate-binding domain (SBD) (also known as peptide-binding domain) binds to the client/substrate proteins. The two domains are allosterically coupled so that, when ATP is bound to the NBD, the SBD binds relatively weakly to clients. When ADP is bound in the NBD, a conformational change enhances the affinity of the SBD for client proteins.</text>
</comment>
<comment type="PTM">
    <text evidence="2">In response to cellular stress, acetylated at Lys-77 by NA110 and then gradually deacetylated by HDAC4 at later stages. Acetylation enhances its chaperone activity and also determines whether it will function as a chaperone for protein refolding or degradation by controlling its binding to co-chaperones HOPX and STUB1. The acetylated form and the non-acetylated form bind to HOPX and STUB1 respectively. Acetylation also protects cells against various types of cellular stress.</text>
</comment>
<comment type="similarity">
    <text evidence="8">Belongs to the heat shock protein 70 family.</text>
</comment>
<gene>
    <name type="primary">Hspa1b</name>
    <name type="synonym">Hcp70.1</name>
    <name type="synonym">Hsp70-1</name>
    <name type="synonym">Hsp70a1</name>
    <name type="synonym">Hspa1</name>
</gene>